<feature type="chain" id="PRO_0000121426" description="Protein nucleotidyltransferase YdiU">
    <location>
        <begin position="1"/>
        <end position="480"/>
    </location>
</feature>
<feature type="active site" description="Proton acceptor" evidence="1">
    <location>
        <position position="248"/>
    </location>
</feature>
<feature type="binding site" evidence="1">
    <location>
        <position position="86"/>
    </location>
    <ligand>
        <name>ATP</name>
        <dbReference type="ChEBI" id="CHEBI:30616"/>
    </ligand>
</feature>
<feature type="binding site" evidence="1">
    <location>
        <position position="88"/>
    </location>
    <ligand>
        <name>ATP</name>
        <dbReference type="ChEBI" id="CHEBI:30616"/>
    </ligand>
</feature>
<feature type="binding site" evidence="1">
    <location>
        <position position="89"/>
    </location>
    <ligand>
        <name>ATP</name>
        <dbReference type="ChEBI" id="CHEBI:30616"/>
    </ligand>
</feature>
<feature type="binding site" evidence="1">
    <location>
        <position position="109"/>
    </location>
    <ligand>
        <name>ATP</name>
        <dbReference type="ChEBI" id="CHEBI:30616"/>
    </ligand>
</feature>
<feature type="binding site" evidence="1">
    <location>
        <position position="121"/>
    </location>
    <ligand>
        <name>ATP</name>
        <dbReference type="ChEBI" id="CHEBI:30616"/>
    </ligand>
</feature>
<feature type="binding site" evidence="1">
    <location>
        <position position="122"/>
    </location>
    <ligand>
        <name>ATP</name>
        <dbReference type="ChEBI" id="CHEBI:30616"/>
    </ligand>
</feature>
<feature type="binding site" evidence="1">
    <location>
        <position position="172"/>
    </location>
    <ligand>
        <name>ATP</name>
        <dbReference type="ChEBI" id="CHEBI:30616"/>
    </ligand>
</feature>
<feature type="binding site" evidence="1">
    <location>
        <position position="179"/>
    </location>
    <ligand>
        <name>ATP</name>
        <dbReference type="ChEBI" id="CHEBI:30616"/>
    </ligand>
</feature>
<feature type="binding site" evidence="1">
    <location>
        <position position="249"/>
    </location>
    <ligand>
        <name>Mg(2+)</name>
        <dbReference type="ChEBI" id="CHEBI:18420"/>
    </ligand>
</feature>
<feature type="binding site" evidence="1">
    <location>
        <position position="258"/>
    </location>
    <ligand>
        <name>ATP</name>
        <dbReference type="ChEBI" id="CHEBI:30616"/>
    </ligand>
</feature>
<feature type="binding site" evidence="1">
    <location>
        <position position="258"/>
    </location>
    <ligand>
        <name>Mg(2+)</name>
        <dbReference type="ChEBI" id="CHEBI:18420"/>
    </ligand>
</feature>
<organism>
    <name type="scientific">Salmonella typhi</name>
    <dbReference type="NCBI Taxonomy" id="90370"/>
    <lineage>
        <taxon>Bacteria</taxon>
        <taxon>Pseudomonadati</taxon>
        <taxon>Pseudomonadota</taxon>
        <taxon>Gammaproteobacteria</taxon>
        <taxon>Enterobacterales</taxon>
        <taxon>Enterobacteriaceae</taxon>
        <taxon>Salmonella</taxon>
    </lineage>
</organism>
<reference key="1">
    <citation type="journal article" date="2001" name="Nature">
        <title>Complete genome sequence of a multiple drug resistant Salmonella enterica serovar Typhi CT18.</title>
        <authorList>
            <person name="Parkhill J."/>
            <person name="Dougan G."/>
            <person name="James K.D."/>
            <person name="Thomson N.R."/>
            <person name="Pickard D."/>
            <person name="Wain J."/>
            <person name="Churcher C.M."/>
            <person name="Mungall K.L."/>
            <person name="Bentley S.D."/>
            <person name="Holden M.T.G."/>
            <person name="Sebaihia M."/>
            <person name="Baker S."/>
            <person name="Basham D."/>
            <person name="Brooks K."/>
            <person name="Chillingworth T."/>
            <person name="Connerton P."/>
            <person name="Cronin A."/>
            <person name="Davis P."/>
            <person name="Davies R.M."/>
            <person name="Dowd L."/>
            <person name="White N."/>
            <person name="Farrar J."/>
            <person name="Feltwell T."/>
            <person name="Hamlin N."/>
            <person name="Haque A."/>
            <person name="Hien T.T."/>
            <person name="Holroyd S."/>
            <person name="Jagels K."/>
            <person name="Krogh A."/>
            <person name="Larsen T.S."/>
            <person name="Leather S."/>
            <person name="Moule S."/>
            <person name="O'Gaora P."/>
            <person name="Parry C."/>
            <person name="Quail M.A."/>
            <person name="Rutherford K.M."/>
            <person name="Simmonds M."/>
            <person name="Skelton J."/>
            <person name="Stevens K."/>
            <person name="Whitehead S."/>
            <person name="Barrell B.G."/>
        </authorList>
    </citation>
    <scope>NUCLEOTIDE SEQUENCE [LARGE SCALE GENOMIC DNA]</scope>
    <source>
        <strain>CT18</strain>
    </source>
</reference>
<reference key="2">
    <citation type="journal article" date="2003" name="J. Bacteriol.">
        <title>Comparative genomics of Salmonella enterica serovar Typhi strains Ty2 and CT18.</title>
        <authorList>
            <person name="Deng W."/>
            <person name="Liou S.-R."/>
            <person name="Plunkett G. III"/>
            <person name="Mayhew G.F."/>
            <person name="Rose D.J."/>
            <person name="Burland V."/>
            <person name="Kodoyianni V."/>
            <person name="Schwartz D.C."/>
            <person name="Blattner F.R."/>
        </authorList>
    </citation>
    <scope>NUCLEOTIDE SEQUENCE [LARGE SCALE GENOMIC DNA]</scope>
    <source>
        <strain>ATCC 700931 / Ty2</strain>
    </source>
</reference>
<sequence length="480" mass="54818">MTLSFTARWRDELPATYTALLPTPLKNARLIWYNDELAQQLAIPASLFDATNGAGVWGGETLLPGMSPVAQVYSGHQFGIWAGQLGDGRGILLGEQLLADGSTLDWHLKGAGLTPYSRMGDGRAVLRSTIRESLASEAMHYLGIPTTRALSIVASDTPVQRETQETGAMLMRLAQSHMRFGHFEHFYYRREPEKVQQLADFAIRHYWPQWQDVAEKYALWFEEVAARTGRLIAEWQTVGFSHGVMNTDNMSILGLTIDYGPFGFLDDYDPGFIGNHSDHQGRYRFDNQPSVALWNLQRLAQTLTPFIEIDALNRALDRYQDALLTHYGQRMRQKLGFFTEQKDDNALLNELFSLMAREGSDYTRTFRMLSHTEQQSASSPLRDTFIDRAAFDAWFDRYRARLRTEAVDDALRQQQMQRVNPAIVLRNWLAQRAIDAAEQGDMAELHRLHEVLRQPFTDRDDDYASRPPEWGKRLEVSCSS</sequence>
<name>SELO_SALTI</name>
<keyword id="KW-0067">ATP-binding</keyword>
<keyword id="KW-0460">Magnesium</keyword>
<keyword id="KW-0464">Manganese</keyword>
<keyword id="KW-0479">Metal-binding</keyword>
<keyword id="KW-0547">Nucleotide-binding</keyword>
<keyword id="KW-0548">Nucleotidyltransferase</keyword>
<keyword id="KW-0808">Transferase</keyword>
<evidence type="ECO:0000255" key="1">
    <source>
        <dbReference type="HAMAP-Rule" id="MF_00692"/>
    </source>
</evidence>
<dbReference type="EC" id="2.7.7.-" evidence="1"/>
<dbReference type="EC" id="2.7.7.108" evidence="1"/>
<dbReference type="EMBL" id="AL513382">
    <property type="protein sequence ID" value="CAD02007.1"/>
    <property type="molecule type" value="Genomic_DNA"/>
</dbReference>
<dbReference type="EMBL" id="AE014613">
    <property type="protein sequence ID" value="AAO68881.1"/>
    <property type="molecule type" value="Genomic_DNA"/>
</dbReference>
<dbReference type="RefSeq" id="NP_456166.1">
    <property type="nucleotide sequence ID" value="NC_003198.1"/>
</dbReference>
<dbReference type="RefSeq" id="WP_000175658.1">
    <property type="nucleotide sequence ID" value="NZ_WSUR01000011.1"/>
</dbReference>
<dbReference type="SMR" id="Q8Z6I8"/>
<dbReference type="STRING" id="220341.gene:17585699"/>
<dbReference type="KEGG" id="stt:t1226"/>
<dbReference type="KEGG" id="sty:STY1765"/>
<dbReference type="PATRIC" id="fig|220341.7.peg.1777"/>
<dbReference type="eggNOG" id="COG0397">
    <property type="taxonomic scope" value="Bacteria"/>
</dbReference>
<dbReference type="HOGENOM" id="CLU_010245_4_0_6"/>
<dbReference type="OMA" id="YGPYGWL"/>
<dbReference type="OrthoDB" id="9776281at2"/>
<dbReference type="Proteomes" id="UP000000541">
    <property type="component" value="Chromosome"/>
</dbReference>
<dbReference type="Proteomes" id="UP000002670">
    <property type="component" value="Chromosome"/>
</dbReference>
<dbReference type="GO" id="GO:0070733">
    <property type="term" value="F:AMPylase activity"/>
    <property type="evidence" value="ECO:0007669"/>
    <property type="project" value="RHEA"/>
</dbReference>
<dbReference type="GO" id="GO:0005524">
    <property type="term" value="F:ATP binding"/>
    <property type="evidence" value="ECO:0007669"/>
    <property type="project" value="UniProtKB-UniRule"/>
</dbReference>
<dbReference type="GO" id="GO:0000287">
    <property type="term" value="F:magnesium ion binding"/>
    <property type="evidence" value="ECO:0007669"/>
    <property type="project" value="UniProtKB-UniRule"/>
</dbReference>
<dbReference type="HAMAP" id="MF_00692">
    <property type="entry name" value="YdiU_SelO"/>
    <property type="match status" value="1"/>
</dbReference>
<dbReference type="InterPro" id="IPR054838">
    <property type="entry name" value="adnlytase_SelO"/>
</dbReference>
<dbReference type="InterPro" id="IPR003846">
    <property type="entry name" value="SelO"/>
</dbReference>
<dbReference type="NCBIfam" id="NF040880">
    <property type="entry name" value="adnlytase_SelO"/>
    <property type="match status" value="1"/>
</dbReference>
<dbReference type="NCBIfam" id="NF000658">
    <property type="entry name" value="PRK00029.1"/>
    <property type="match status" value="1"/>
</dbReference>
<dbReference type="PANTHER" id="PTHR32057">
    <property type="entry name" value="PROTEIN ADENYLYLTRANSFERASE SELO, MITOCHONDRIAL"/>
    <property type="match status" value="1"/>
</dbReference>
<dbReference type="PANTHER" id="PTHR32057:SF14">
    <property type="entry name" value="PROTEIN ADENYLYLTRANSFERASE SELO, MITOCHONDRIAL"/>
    <property type="match status" value="1"/>
</dbReference>
<dbReference type="Pfam" id="PF02696">
    <property type="entry name" value="SelO"/>
    <property type="match status" value="1"/>
</dbReference>
<protein>
    <recommendedName>
        <fullName evidence="1">Protein nucleotidyltransferase YdiU</fullName>
        <ecNumber evidence="1">2.7.7.-</ecNumber>
    </recommendedName>
    <alternativeName>
        <fullName evidence="1">Protein adenylyltransferase YdiU</fullName>
        <ecNumber evidence="1">2.7.7.108</ecNumber>
    </alternativeName>
    <alternativeName>
        <fullName evidence="1">Protein uridylyltransferase YdiU</fullName>
        <ecNumber evidence="1">2.7.7.-</ecNumber>
    </alternativeName>
</protein>
<proteinExistence type="inferred from homology"/>
<gene>
    <name evidence="1" type="primary">ydiU</name>
    <name evidence="1" type="synonym">selO</name>
    <name type="ordered locus">STY1765</name>
    <name type="ordered locus">t1226</name>
</gene>
<accession>Q8Z6I8</accession>
<comment type="function">
    <text evidence="1">Nucleotidyltransferase involved in the post-translational modification of proteins. It can catalyze the addition of adenosine monophosphate (AMP) or uridine monophosphate (UMP) to a protein, resulting in modifications known as AMPylation and UMPylation.</text>
</comment>
<comment type="catalytic activity">
    <reaction evidence="1">
        <text>L-seryl-[protein] + ATP = 3-O-(5'-adenylyl)-L-seryl-[protein] + diphosphate</text>
        <dbReference type="Rhea" id="RHEA:58120"/>
        <dbReference type="Rhea" id="RHEA-COMP:9863"/>
        <dbReference type="Rhea" id="RHEA-COMP:15073"/>
        <dbReference type="ChEBI" id="CHEBI:29999"/>
        <dbReference type="ChEBI" id="CHEBI:30616"/>
        <dbReference type="ChEBI" id="CHEBI:33019"/>
        <dbReference type="ChEBI" id="CHEBI:142516"/>
        <dbReference type="EC" id="2.7.7.108"/>
    </reaction>
</comment>
<comment type="catalytic activity">
    <reaction evidence="1">
        <text>L-threonyl-[protein] + ATP = 3-O-(5'-adenylyl)-L-threonyl-[protein] + diphosphate</text>
        <dbReference type="Rhea" id="RHEA:54292"/>
        <dbReference type="Rhea" id="RHEA-COMP:11060"/>
        <dbReference type="Rhea" id="RHEA-COMP:13847"/>
        <dbReference type="ChEBI" id="CHEBI:30013"/>
        <dbReference type="ChEBI" id="CHEBI:30616"/>
        <dbReference type="ChEBI" id="CHEBI:33019"/>
        <dbReference type="ChEBI" id="CHEBI:138113"/>
        <dbReference type="EC" id="2.7.7.108"/>
    </reaction>
</comment>
<comment type="catalytic activity">
    <reaction evidence="1">
        <text>L-tyrosyl-[protein] + ATP = O-(5'-adenylyl)-L-tyrosyl-[protein] + diphosphate</text>
        <dbReference type="Rhea" id="RHEA:54288"/>
        <dbReference type="Rhea" id="RHEA-COMP:10136"/>
        <dbReference type="Rhea" id="RHEA-COMP:13846"/>
        <dbReference type="ChEBI" id="CHEBI:30616"/>
        <dbReference type="ChEBI" id="CHEBI:33019"/>
        <dbReference type="ChEBI" id="CHEBI:46858"/>
        <dbReference type="ChEBI" id="CHEBI:83624"/>
        <dbReference type="EC" id="2.7.7.108"/>
    </reaction>
</comment>
<comment type="catalytic activity">
    <reaction evidence="1">
        <text>L-histidyl-[protein] + UTP = N(tele)-(5'-uridylyl)-L-histidyl-[protein] + diphosphate</text>
        <dbReference type="Rhea" id="RHEA:83891"/>
        <dbReference type="Rhea" id="RHEA-COMP:9745"/>
        <dbReference type="Rhea" id="RHEA-COMP:20239"/>
        <dbReference type="ChEBI" id="CHEBI:29979"/>
        <dbReference type="ChEBI" id="CHEBI:33019"/>
        <dbReference type="ChEBI" id="CHEBI:46398"/>
        <dbReference type="ChEBI" id="CHEBI:233474"/>
    </reaction>
</comment>
<comment type="catalytic activity">
    <reaction evidence="1">
        <text>L-seryl-[protein] + UTP = O-(5'-uridylyl)-L-seryl-[protein] + diphosphate</text>
        <dbReference type="Rhea" id="RHEA:64604"/>
        <dbReference type="Rhea" id="RHEA-COMP:9863"/>
        <dbReference type="Rhea" id="RHEA-COMP:16635"/>
        <dbReference type="ChEBI" id="CHEBI:29999"/>
        <dbReference type="ChEBI" id="CHEBI:33019"/>
        <dbReference type="ChEBI" id="CHEBI:46398"/>
        <dbReference type="ChEBI" id="CHEBI:156051"/>
    </reaction>
</comment>
<comment type="catalytic activity">
    <reaction evidence="1">
        <text>L-tyrosyl-[protein] + UTP = O-(5'-uridylyl)-L-tyrosyl-[protein] + diphosphate</text>
        <dbReference type="Rhea" id="RHEA:83887"/>
        <dbReference type="Rhea" id="RHEA-COMP:10136"/>
        <dbReference type="Rhea" id="RHEA-COMP:20238"/>
        <dbReference type="ChEBI" id="CHEBI:33019"/>
        <dbReference type="ChEBI" id="CHEBI:46398"/>
        <dbReference type="ChEBI" id="CHEBI:46858"/>
        <dbReference type="ChEBI" id="CHEBI:90602"/>
    </reaction>
</comment>
<comment type="cofactor">
    <cofactor evidence="1">
        <name>Mg(2+)</name>
        <dbReference type="ChEBI" id="CHEBI:18420"/>
    </cofactor>
    <cofactor evidence="1">
        <name>Mn(2+)</name>
        <dbReference type="ChEBI" id="CHEBI:29035"/>
    </cofactor>
</comment>
<comment type="similarity">
    <text evidence="1">Belongs to the SELO family.</text>
</comment>